<reference key="1">
    <citation type="submission" date="2006-09" db="EMBL/GenBank/DDBJ databases">
        <authorList>
            <consortium name="NIH - Xenopus Gene Collection (XGC) project"/>
        </authorList>
    </citation>
    <scope>NUCLEOTIDE SEQUENCE [LARGE SCALE MRNA]</scope>
    <source>
        <tissue>Brain</tissue>
    </source>
</reference>
<keyword id="KW-0009">Actin-binding</keyword>
<keyword id="KW-0175">Coiled coil</keyword>
<keyword id="KW-1185">Reference proteome</keyword>
<name>INF2_XENTR</name>
<comment type="similarity">
    <text evidence="6">Belongs to the formin homology family.</text>
</comment>
<evidence type="ECO:0000255" key="1"/>
<evidence type="ECO:0000255" key="2">
    <source>
        <dbReference type="PROSITE-ProRule" id="PRU00406"/>
    </source>
</evidence>
<evidence type="ECO:0000255" key="3">
    <source>
        <dbReference type="PROSITE-ProRule" id="PRU00579"/>
    </source>
</evidence>
<evidence type="ECO:0000255" key="4">
    <source>
        <dbReference type="PROSITE-ProRule" id="PRU00774"/>
    </source>
</evidence>
<evidence type="ECO:0000256" key="5">
    <source>
        <dbReference type="SAM" id="MobiDB-lite"/>
    </source>
</evidence>
<evidence type="ECO:0000305" key="6"/>
<protein>
    <recommendedName>
        <fullName>Inverted formin-2</fullName>
    </recommendedName>
</protein>
<organism>
    <name type="scientific">Xenopus tropicalis</name>
    <name type="common">Western clawed frog</name>
    <name type="synonym">Silurana tropicalis</name>
    <dbReference type="NCBI Taxonomy" id="8364"/>
    <lineage>
        <taxon>Eukaryota</taxon>
        <taxon>Metazoa</taxon>
        <taxon>Chordata</taxon>
        <taxon>Craniata</taxon>
        <taxon>Vertebrata</taxon>
        <taxon>Euteleostomi</taxon>
        <taxon>Amphibia</taxon>
        <taxon>Batrachia</taxon>
        <taxon>Anura</taxon>
        <taxon>Pipoidea</taxon>
        <taxon>Pipidae</taxon>
        <taxon>Xenopodinae</taxon>
        <taxon>Xenopus</taxon>
        <taxon>Silurana</taxon>
    </lineage>
</organism>
<sequence>MSLKEGAHTKWGVLKQKLGPQDPEQIEGNMENADPELCIRLLQIPSVVNYSGLKKRLESSDDDWMVQFLELSGLDLLLEALDRLSGRGVARIADALLQLTCINCVRTLMNSHRGIEYIVNNEGYVRKLSQALDTSNVMVKKQVFELLAALCIYSPEGHALSLDALEHYKAVKNQQYRFSVIMNELSTSDNVPYMVTLLSAINAIIFGTEELRKRVQLRNEFIGLQLLDLLTKLRDLEDEDLLIQAIVFEEAKSEDEEELLKIYGGIDMNNHQEVFSTLFNKVSCSPLSVQLLSVLQGLLHLDQSHPSSPLLWEALDILVNRAVLLADDCQNNNVEEVMDRLVTSKKHPSKEKRKPDKCTNQVNKSIQTDKPKDESCEEKTVKKDPVSSGIPADSLQLSDALLALPACVSPLHTPLSGDITSPSHFPSPPSPVVSNAIDRISTSSSLPPPLPPPLPGTELSLPPPPPPPLPGMGGISLTPPPPPPLPGMGGMLPPPPPPLPGMGGMLPPPPPPLPGMGGMLPPPPPPLPGMGGMLPPPPPPLPGMGGMPPPPPPLPGMGGMPPPPPPMFGMGTFTDEVVVARVDYSLGYLPKAYFKVNKPTLKMKKLNWQKLPPNVINDTHSMWASASSSNDTPEPNYSSIEQLFCLPQAVAKEPAAPVKKPPKEISFLDSKKNLNLNIFLKQFKCPNEEVIQLIEKGDRSRFDIEILKQFLKLLPEKHEVENLKSYQEDKAKLSNADQFYLLLLGIPCYQLRIECMLICEEVNLMTDVLRPKAKVVSSACDDIISSHRLPLFCQLILKVGNFLNYGSHTGNANGFKIGTLLKLTETKANQNRITLLHHILEEIEQNHTDLLQLPSDLENVSTAAGINIENMYSETSGNLKKLRDLQNKISTAATDVKDQYEKSIQECMDALKEVEEQLTDITQKKVKLADYLCEDSAKLSLEETFSTMKAFRDLFLKAKKDNKDRKEQAVKAEKRKKQLADEEAKRQKGENGKIIRKGAAKLEEGCIIDALLADIKKGFQLRKTAKTKTEADSCPKPVSSETTGTDGTDVKHVDHVGILPQIKLDSSLNLDGTEQHKSKSKDNCGENFDNKPVVIAPINLDTSACLMNISEQNAKLPVSALQEGANLKQNPDTFVKEQSAIVTTESSTHNNIDGSSVDKCTLGQSQWPSEISDEVDSKYHEMPMQVEHKERAVEGKCSLPKPSVLGTESSSNQNNALNEGSQQHHNNTANESLQQAQNSALSEASQQSCCHTGIKGSPQFQSSALNADSQPSHTSVVGSAQAQRNELDDVALQTRDTTVTEGSQVEEDKCNDEGYPEHKTMGEHPLNSSSHSTTLQQSSEDGQKVKRGSSKHKKKRRSSKHGEEDGVDSPTHKTRGCVVQ</sequence>
<accession>Q0IHV1</accession>
<feature type="chain" id="PRO_0000259892" description="Inverted formin-2">
    <location>
        <begin position="1"/>
        <end position="1380"/>
    </location>
</feature>
<feature type="domain" description="GBD/FH3" evidence="3">
    <location>
        <begin position="1"/>
        <end position="330"/>
    </location>
</feature>
<feature type="domain" description="FH1">
    <location>
        <begin position="432"/>
        <end position="592"/>
    </location>
</feature>
<feature type="domain" description="FH2" evidence="4">
    <location>
        <begin position="593"/>
        <end position="981"/>
    </location>
</feature>
<feature type="domain" description="WH2" evidence="2">
    <location>
        <begin position="1009"/>
        <end position="1024"/>
    </location>
</feature>
<feature type="region of interest" description="Disordered" evidence="5">
    <location>
        <begin position="341"/>
        <end position="391"/>
    </location>
</feature>
<feature type="region of interest" description="Disordered" evidence="5">
    <location>
        <begin position="440"/>
        <end position="541"/>
    </location>
</feature>
<feature type="region of interest" description="Disordered" evidence="5">
    <location>
        <begin position="1026"/>
        <end position="1049"/>
    </location>
</feature>
<feature type="region of interest" description="Disordered" evidence="5">
    <location>
        <begin position="1188"/>
        <end position="1244"/>
    </location>
</feature>
<feature type="region of interest" description="Disordered" evidence="5">
    <location>
        <begin position="1260"/>
        <end position="1380"/>
    </location>
</feature>
<feature type="coiled-coil region" evidence="1">
    <location>
        <begin position="879"/>
        <end position="930"/>
    </location>
</feature>
<feature type="coiled-coil region" evidence="1">
    <location>
        <begin position="956"/>
        <end position="991"/>
    </location>
</feature>
<feature type="compositionally biased region" description="Basic residues" evidence="5">
    <location>
        <begin position="343"/>
        <end position="352"/>
    </location>
</feature>
<feature type="compositionally biased region" description="Basic and acidic residues" evidence="5">
    <location>
        <begin position="367"/>
        <end position="385"/>
    </location>
</feature>
<feature type="compositionally biased region" description="Pro residues" evidence="5">
    <location>
        <begin position="446"/>
        <end position="470"/>
    </location>
</feature>
<feature type="compositionally biased region" description="Pro residues" evidence="5">
    <location>
        <begin position="478"/>
        <end position="541"/>
    </location>
</feature>
<feature type="compositionally biased region" description="Polar residues" evidence="5">
    <location>
        <begin position="1206"/>
        <end position="1244"/>
    </location>
</feature>
<feature type="compositionally biased region" description="Polar residues" evidence="5">
    <location>
        <begin position="1260"/>
        <end position="1284"/>
    </location>
</feature>
<feature type="compositionally biased region" description="Polar residues" evidence="5">
    <location>
        <begin position="1294"/>
        <end position="1303"/>
    </location>
</feature>
<feature type="compositionally biased region" description="Basic and acidic residues" evidence="5">
    <location>
        <begin position="1306"/>
        <end position="1322"/>
    </location>
</feature>
<feature type="compositionally biased region" description="Low complexity" evidence="5">
    <location>
        <begin position="1328"/>
        <end position="1339"/>
    </location>
</feature>
<feature type="compositionally biased region" description="Basic residues" evidence="5">
    <location>
        <begin position="1345"/>
        <end position="1359"/>
    </location>
</feature>
<proteinExistence type="evidence at transcript level"/>
<dbReference type="EMBL" id="BC122958">
    <property type="protein sequence ID" value="AAI22959.1"/>
    <property type="molecule type" value="mRNA"/>
</dbReference>
<dbReference type="RefSeq" id="NP_001072591.1">
    <property type="nucleotide sequence ID" value="NM_001079123.1"/>
</dbReference>
<dbReference type="RefSeq" id="XP_012824085.1">
    <property type="nucleotide sequence ID" value="XM_012968631.3"/>
</dbReference>
<dbReference type="RefSeq" id="XP_012824086.1">
    <property type="nucleotide sequence ID" value="XM_012968632.3"/>
</dbReference>
<dbReference type="RefSeq" id="XP_012824087.1">
    <property type="nucleotide sequence ID" value="XM_012968633.3"/>
</dbReference>
<dbReference type="RefSeq" id="XP_017951812.1">
    <property type="nucleotide sequence ID" value="XM_018096323.2"/>
</dbReference>
<dbReference type="SMR" id="Q0IHV1"/>
<dbReference type="FunCoup" id="Q0IHV1">
    <property type="interactions" value="750"/>
</dbReference>
<dbReference type="PaxDb" id="8364-ENSXETP00000018819"/>
<dbReference type="GeneID" id="780046"/>
<dbReference type="KEGG" id="xtr:780046"/>
<dbReference type="AGR" id="Xenbase:XB-GENE-5862185"/>
<dbReference type="CTD" id="64423"/>
<dbReference type="Xenbase" id="XB-GENE-5862185">
    <property type="gene designation" value="inf2"/>
</dbReference>
<dbReference type="eggNOG" id="KOG1922">
    <property type="taxonomic scope" value="Eukaryota"/>
</dbReference>
<dbReference type="HOGENOM" id="CLU_005383_1_0_1"/>
<dbReference type="InParanoid" id="Q0IHV1"/>
<dbReference type="OMA" id="MVCSQQY"/>
<dbReference type="OrthoDB" id="26518at2759"/>
<dbReference type="PhylomeDB" id="Q0IHV1"/>
<dbReference type="TreeFam" id="TF326300"/>
<dbReference type="Proteomes" id="UP000008143">
    <property type="component" value="Chromosome 8"/>
</dbReference>
<dbReference type="GO" id="GO:0003779">
    <property type="term" value="F:actin binding"/>
    <property type="evidence" value="ECO:0007669"/>
    <property type="project" value="UniProtKB-KW"/>
</dbReference>
<dbReference type="GO" id="GO:0031267">
    <property type="term" value="F:small GTPase binding"/>
    <property type="evidence" value="ECO:0007669"/>
    <property type="project" value="InterPro"/>
</dbReference>
<dbReference type="GO" id="GO:0030036">
    <property type="term" value="P:actin cytoskeleton organization"/>
    <property type="evidence" value="ECO:0007669"/>
    <property type="project" value="InterPro"/>
</dbReference>
<dbReference type="Gene3D" id="1.20.58.2220">
    <property type="entry name" value="Formin, FH2 domain"/>
    <property type="match status" value="1"/>
</dbReference>
<dbReference type="Gene3D" id="1.10.238.150">
    <property type="entry name" value="Formin, FH3 diaphanous domain"/>
    <property type="match status" value="1"/>
</dbReference>
<dbReference type="Gene3D" id="1.25.10.10">
    <property type="entry name" value="Leucine-rich Repeat Variant"/>
    <property type="match status" value="1"/>
</dbReference>
<dbReference type="InterPro" id="IPR011989">
    <property type="entry name" value="ARM-like"/>
</dbReference>
<dbReference type="InterPro" id="IPR016024">
    <property type="entry name" value="ARM-type_fold"/>
</dbReference>
<dbReference type="InterPro" id="IPR015425">
    <property type="entry name" value="FH2_Formin"/>
</dbReference>
<dbReference type="InterPro" id="IPR042201">
    <property type="entry name" value="FH2_Formin_sf"/>
</dbReference>
<dbReference type="InterPro" id="IPR010472">
    <property type="entry name" value="FH3_dom"/>
</dbReference>
<dbReference type="InterPro" id="IPR014768">
    <property type="entry name" value="GBD/FH3_dom"/>
</dbReference>
<dbReference type="InterPro" id="IPR010473">
    <property type="entry name" value="GTPase-bd"/>
</dbReference>
<dbReference type="InterPro" id="IPR003124">
    <property type="entry name" value="WH2_dom"/>
</dbReference>
<dbReference type="PANTHER" id="PTHR46345">
    <property type="entry name" value="INVERTED FORMIN-2"/>
    <property type="match status" value="1"/>
</dbReference>
<dbReference type="PANTHER" id="PTHR46345:SF5">
    <property type="entry name" value="INVERTED FORMIN-2"/>
    <property type="match status" value="1"/>
</dbReference>
<dbReference type="Pfam" id="PF06367">
    <property type="entry name" value="Drf_FH3"/>
    <property type="match status" value="1"/>
</dbReference>
<dbReference type="Pfam" id="PF06371">
    <property type="entry name" value="Drf_GBD"/>
    <property type="match status" value="1"/>
</dbReference>
<dbReference type="Pfam" id="PF02181">
    <property type="entry name" value="FH2"/>
    <property type="match status" value="1"/>
</dbReference>
<dbReference type="PRINTS" id="PR01217">
    <property type="entry name" value="PRICHEXTENSN"/>
</dbReference>
<dbReference type="SMART" id="SM01139">
    <property type="entry name" value="Drf_FH3"/>
    <property type="match status" value="1"/>
</dbReference>
<dbReference type="SMART" id="SM01140">
    <property type="entry name" value="Drf_GBD"/>
    <property type="match status" value="1"/>
</dbReference>
<dbReference type="SMART" id="SM00498">
    <property type="entry name" value="FH2"/>
    <property type="match status" value="1"/>
</dbReference>
<dbReference type="SUPFAM" id="SSF48371">
    <property type="entry name" value="ARM repeat"/>
    <property type="match status" value="1"/>
</dbReference>
<dbReference type="SUPFAM" id="SSF101447">
    <property type="entry name" value="Formin homology 2 domain (FH2 domain)"/>
    <property type="match status" value="1"/>
</dbReference>
<dbReference type="PROSITE" id="PS51444">
    <property type="entry name" value="FH2"/>
    <property type="match status" value="1"/>
</dbReference>
<dbReference type="PROSITE" id="PS51232">
    <property type="entry name" value="GBD_FH3"/>
    <property type="match status" value="1"/>
</dbReference>
<dbReference type="PROSITE" id="PS51082">
    <property type="entry name" value="WH2"/>
    <property type="match status" value="1"/>
</dbReference>
<gene>
    <name type="primary">inf2</name>
</gene>